<gene>
    <name evidence="1" type="primary">pheT</name>
    <name type="ordered locus">Wbm0461</name>
</gene>
<dbReference type="EC" id="6.1.1.20" evidence="1"/>
<dbReference type="EMBL" id="AE017321">
    <property type="protein sequence ID" value="AAW71049.1"/>
    <property type="molecule type" value="Genomic_DNA"/>
</dbReference>
<dbReference type="RefSeq" id="WP_011256659.1">
    <property type="nucleotide sequence ID" value="NC_006833.1"/>
</dbReference>
<dbReference type="SMR" id="Q5GSH5"/>
<dbReference type="STRING" id="292805.Wbm0461"/>
<dbReference type="KEGG" id="wbm:Wbm0461"/>
<dbReference type="eggNOG" id="COG0072">
    <property type="taxonomic scope" value="Bacteria"/>
</dbReference>
<dbReference type="eggNOG" id="COG0073">
    <property type="taxonomic scope" value="Bacteria"/>
</dbReference>
<dbReference type="HOGENOM" id="CLU_016891_0_0_5"/>
<dbReference type="Proteomes" id="UP000000534">
    <property type="component" value="Chromosome"/>
</dbReference>
<dbReference type="GO" id="GO:0009328">
    <property type="term" value="C:phenylalanine-tRNA ligase complex"/>
    <property type="evidence" value="ECO:0007669"/>
    <property type="project" value="TreeGrafter"/>
</dbReference>
<dbReference type="GO" id="GO:0005524">
    <property type="term" value="F:ATP binding"/>
    <property type="evidence" value="ECO:0007669"/>
    <property type="project" value="UniProtKB-UniRule"/>
</dbReference>
<dbReference type="GO" id="GO:0000287">
    <property type="term" value="F:magnesium ion binding"/>
    <property type="evidence" value="ECO:0007669"/>
    <property type="project" value="UniProtKB-UniRule"/>
</dbReference>
<dbReference type="GO" id="GO:0004826">
    <property type="term" value="F:phenylalanine-tRNA ligase activity"/>
    <property type="evidence" value="ECO:0007669"/>
    <property type="project" value="UniProtKB-UniRule"/>
</dbReference>
<dbReference type="GO" id="GO:0000049">
    <property type="term" value="F:tRNA binding"/>
    <property type="evidence" value="ECO:0007669"/>
    <property type="project" value="UniProtKB-KW"/>
</dbReference>
<dbReference type="GO" id="GO:0006432">
    <property type="term" value="P:phenylalanyl-tRNA aminoacylation"/>
    <property type="evidence" value="ECO:0007669"/>
    <property type="project" value="UniProtKB-UniRule"/>
</dbReference>
<dbReference type="CDD" id="cd00769">
    <property type="entry name" value="PheRS_beta_core"/>
    <property type="match status" value="1"/>
</dbReference>
<dbReference type="CDD" id="cd02796">
    <property type="entry name" value="tRNA_bind_bactPheRS"/>
    <property type="match status" value="1"/>
</dbReference>
<dbReference type="FunFam" id="2.40.50.140:FF:000045">
    <property type="entry name" value="Phenylalanine--tRNA ligase beta subunit"/>
    <property type="match status" value="1"/>
</dbReference>
<dbReference type="Gene3D" id="3.30.56.10">
    <property type="match status" value="2"/>
</dbReference>
<dbReference type="Gene3D" id="3.30.930.10">
    <property type="entry name" value="Bira Bifunctional Protein, Domain 2"/>
    <property type="match status" value="1"/>
</dbReference>
<dbReference type="Gene3D" id="3.30.70.380">
    <property type="entry name" value="Ferrodoxin-fold anticodon-binding domain"/>
    <property type="match status" value="1"/>
</dbReference>
<dbReference type="Gene3D" id="2.40.50.140">
    <property type="entry name" value="Nucleic acid-binding proteins"/>
    <property type="match status" value="1"/>
</dbReference>
<dbReference type="Gene3D" id="3.50.40.10">
    <property type="entry name" value="Phenylalanyl-trna Synthetase, Chain B, domain 3"/>
    <property type="match status" value="1"/>
</dbReference>
<dbReference type="HAMAP" id="MF_00283">
    <property type="entry name" value="Phe_tRNA_synth_beta1"/>
    <property type="match status" value="1"/>
</dbReference>
<dbReference type="InterPro" id="IPR045864">
    <property type="entry name" value="aa-tRNA-synth_II/BPL/LPL"/>
</dbReference>
<dbReference type="InterPro" id="IPR005146">
    <property type="entry name" value="B3/B4_tRNA-bd"/>
</dbReference>
<dbReference type="InterPro" id="IPR009061">
    <property type="entry name" value="DNA-bd_dom_put_sf"/>
</dbReference>
<dbReference type="InterPro" id="IPR005121">
    <property type="entry name" value="Fdx_antiC-bd"/>
</dbReference>
<dbReference type="InterPro" id="IPR036690">
    <property type="entry name" value="Fdx_antiC-bd_sf"/>
</dbReference>
<dbReference type="InterPro" id="IPR012340">
    <property type="entry name" value="NA-bd_OB-fold"/>
</dbReference>
<dbReference type="InterPro" id="IPR045060">
    <property type="entry name" value="Phe-tRNA-ligase_IIc_bsu"/>
</dbReference>
<dbReference type="InterPro" id="IPR004532">
    <property type="entry name" value="Phe-tRNA-ligase_IIc_bsu_bact"/>
</dbReference>
<dbReference type="InterPro" id="IPR020825">
    <property type="entry name" value="Phe-tRNA_synthase-like_B3/B4"/>
</dbReference>
<dbReference type="InterPro" id="IPR041616">
    <property type="entry name" value="PheRS_beta_core"/>
</dbReference>
<dbReference type="InterPro" id="IPR002547">
    <property type="entry name" value="tRNA-bd_dom"/>
</dbReference>
<dbReference type="InterPro" id="IPR033714">
    <property type="entry name" value="tRNA_bind_bactPheRS"/>
</dbReference>
<dbReference type="InterPro" id="IPR005147">
    <property type="entry name" value="tRNA_synthase_B5-dom"/>
</dbReference>
<dbReference type="NCBIfam" id="TIGR00472">
    <property type="entry name" value="pheT_bact"/>
    <property type="match status" value="1"/>
</dbReference>
<dbReference type="NCBIfam" id="NF045760">
    <property type="entry name" value="YtpR"/>
    <property type="match status" value="1"/>
</dbReference>
<dbReference type="PANTHER" id="PTHR10947:SF0">
    <property type="entry name" value="PHENYLALANINE--TRNA LIGASE BETA SUBUNIT"/>
    <property type="match status" value="1"/>
</dbReference>
<dbReference type="PANTHER" id="PTHR10947">
    <property type="entry name" value="PHENYLALANYL-TRNA SYNTHETASE BETA CHAIN AND LEUCINE-RICH REPEAT-CONTAINING PROTEIN 47"/>
    <property type="match status" value="1"/>
</dbReference>
<dbReference type="Pfam" id="PF03483">
    <property type="entry name" value="B3_4"/>
    <property type="match status" value="1"/>
</dbReference>
<dbReference type="Pfam" id="PF03484">
    <property type="entry name" value="B5"/>
    <property type="match status" value="1"/>
</dbReference>
<dbReference type="Pfam" id="PF03147">
    <property type="entry name" value="FDX-ACB"/>
    <property type="match status" value="1"/>
</dbReference>
<dbReference type="Pfam" id="PF01588">
    <property type="entry name" value="tRNA_bind"/>
    <property type="match status" value="1"/>
</dbReference>
<dbReference type="Pfam" id="PF17759">
    <property type="entry name" value="tRNA_synthFbeta"/>
    <property type="match status" value="1"/>
</dbReference>
<dbReference type="SMART" id="SM00873">
    <property type="entry name" value="B3_4"/>
    <property type="match status" value="1"/>
</dbReference>
<dbReference type="SMART" id="SM00874">
    <property type="entry name" value="B5"/>
    <property type="match status" value="1"/>
</dbReference>
<dbReference type="SMART" id="SM00896">
    <property type="entry name" value="FDX-ACB"/>
    <property type="match status" value="1"/>
</dbReference>
<dbReference type="SUPFAM" id="SSF54991">
    <property type="entry name" value="Anticodon-binding domain of PheRS"/>
    <property type="match status" value="1"/>
</dbReference>
<dbReference type="SUPFAM" id="SSF55681">
    <property type="entry name" value="Class II aaRS and biotin synthetases"/>
    <property type="match status" value="1"/>
</dbReference>
<dbReference type="SUPFAM" id="SSF50249">
    <property type="entry name" value="Nucleic acid-binding proteins"/>
    <property type="match status" value="1"/>
</dbReference>
<dbReference type="SUPFAM" id="SSF56037">
    <property type="entry name" value="PheT/TilS domain"/>
    <property type="match status" value="1"/>
</dbReference>
<dbReference type="SUPFAM" id="SSF46955">
    <property type="entry name" value="Putative DNA-binding domain"/>
    <property type="match status" value="1"/>
</dbReference>
<dbReference type="PROSITE" id="PS51483">
    <property type="entry name" value="B5"/>
    <property type="match status" value="1"/>
</dbReference>
<dbReference type="PROSITE" id="PS51447">
    <property type="entry name" value="FDX_ACB"/>
    <property type="match status" value="1"/>
</dbReference>
<dbReference type="PROSITE" id="PS50886">
    <property type="entry name" value="TRBD"/>
    <property type="match status" value="1"/>
</dbReference>
<evidence type="ECO:0000255" key="1">
    <source>
        <dbReference type="HAMAP-Rule" id="MF_00283"/>
    </source>
</evidence>
<sequence length="792" mass="88171">MRFTLSWLLEHLETNASLEEITDKLTHIGLEVKDVVDNTKLAGFIVAKVLEVTPHPNVDKLKLCKVDNGSKILQIVCGANNVREGLKTVLASLGSTLPESNFTIKPTKIRGVLSEGILCSASELMLAQEKSKGIIELSDDYKVGNKFFNCDPVIDINVTTNRGDCLSVHGIARDLAATGIGTLNSLIYSSAIPAHDTGIQDRSKSGMTRSSSINVKVIDGESFISGVYISNVRNKESPRWLKDRLESVGMRSISAIVDITNYIMMSFGRPMHAYDAKKIEGKLIVRKANNGEKFTGLNGKEYLLNNDISVISDNNNIHAIAGIIGGKCSKCTLETTDVFLESAWFNPISVTKSSRQLNISTDSSYRFARSVDPGFILDGLHFAAQMIVDLCGGKASNVVFAGSLDEADTKVSFDYQDVNKFGSVSVLPDEMFDILTKLGFSTDKKTENNWNVKVPSWRSDVTIPADLVEEVVRIYGYDKIKEEPLIDNVEVEINTHDNLRVLMISRGFHEVFTWSFMSESIAEKFGYSNKLFIIDNPFNNNFNIMRPSIVPNLLQVTADNIVHGMSDLAIFEIGPVYDSLDQPKYSLSGIRTGNNLPRNHYNTDRKIDVFDAKADLIAALELFNVSYGNLTIERAEKEYYHPGKSGTLSFKNKATGYFGELHPNILDLFDIKQKVVGFEMILENMGNLPVSREKFIDYKHQSVKRDFAFIVNRDVEVGKIINMVKKSSELITEVFVFDVYHGNNMEPNKMSIALSVTFCSPTHTLIEEEIQKESSAIVNLVHKNTGGILRYT</sequence>
<keyword id="KW-0030">Aminoacyl-tRNA synthetase</keyword>
<keyword id="KW-0067">ATP-binding</keyword>
<keyword id="KW-0963">Cytoplasm</keyword>
<keyword id="KW-0436">Ligase</keyword>
<keyword id="KW-0460">Magnesium</keyword>
<keyword id="KW-0479">Metal-binding</keyword>
<keyword id="KW-0547">Nucleotide-binding</keyword>
<keyword id="KW-0648">Protein biosynthesis</keyword>
<keyword id="KW-1185">Reference proteome</keyword>
<keyword id="KW-0694">RNA-binding</keyword>
<keyword id="KW-0820">tRNA-binding</keyword>
<protein>
    <recommendedName>
        <fullName evidence="1">Phenylalanine--tRNA ligase beta subunit</fullName>
        <ecNumber evidence="1">6.1.1.20</ecNumber>
    </recommendedName>
    <alternativeName>
        <fullName evidence="1">Phenylalanyl-tRNA synthetase beta subunit</fullName>
        <shortName evidence="1">PheRS</shortName>
    </alternativeName>
</protein>
<name>SYFB_WOLTR</name>
<reference key="1">
    <citation type="journal article" date="2005" name="PLoS Biol.">
        <title>The Wolbachia genome of Brugia malayi: endosymbiont evolution within a human pathogenic nematode.</title>
        <authorList>
            <person name="Foster J."/>
            <person name="Ganatra M."/>
            <person name="Kamal I."/>
            <person name="Ware J."/>
            <person name="Makarova K."/>
            <person name="Ivanova N."/>
            <person name="Bhattacharyya A."/>
            <person name="Kapatral V."/>
            <person name="Kumar S."/>
            <person name="Posfai J."/>
            <person name="Vincze T."/>
            <person name="Ingram J."/>
            <person name="Moran L."/>
            <person name="Lapidus A."/>
            <person name="Omelchenko M."/>
            <person name="Kyrpides N."/>
            <person name="Ghedin E."/>
            <person name="Wang S."/>
            <person name="Goltsman E."/>
            <person name="Joukov V."/>
            <person name="Ostrovskaya O."/>
            <person name="Tsukerman K."/>
            <person name="Mazur M."/>
            <person name="Comb D."/>
            <person name="Koonin E."/>
            <person name="Slatko B."/>
        </authorList>
    </citation>
    <scope>NUCLEOTIDE SEQUENCE [LARGE SCALE GENOMIC DNA]</scope>
    <source>
        <strain>TRS</strain>
    </source>
</reference>
<feature type="chain" id="PRO_0000232097" description="Phenylalanine--tRNA ligase beta subunit">
    <location>
        <begin position="1"/>
        <end position="792"/>
    </location>
</feature>
<feature type="domain" description="tRNA-binding" evidence="1">
    <location>
        <begin position="38"/>
        <end position="148"/>
    </location>
</feature>
<feature type="domain" description="B5" evidence="1">
    <location>
        <begin position="406"/>
        <end position="482"/>
    </location>
</feature>
<feature type="domain" description="FDX-ACB" evidence="1">
    <location>
        <begin position="698"/>
        <end position="790"/>
    </location>
</feature>
<feature type="binding site" evidence="1">
    <location>
        <position position="460"/>
    </location>
    <ligand>
        <name>Mg(2+)</name>
        <dbReference type="ChEBI" id="CHEBI:18420"/>
        <note>shared with alpha subunit</note>
    </ligand>
</feature>
<feature type="binding site" evidence="1">
    <location>
        <position position="466"/>
    </location>
    <ligand>
        <name>Mg(2+)</name>
        <dbReference type="ChEBI" id="CHEBI:18420"/>
        <note>shared with alpha subunit</note>
    </ligand>
</feature>
<feature type="binding site" evidence="1">
    <location>
        <position position="469"/>
    </location>
    <ligand>
        <name>Mg(2+)</name>
        <dbReference type="ChEBI" id="CHEBI:18420"/>
        <note>shared with alpha subunit</note>
    </ligand>
</feature>
<feature type="binding site" evidence="1">
    <location>
        <position position="470"/>
    </location>
    <ligand>
        <name>Mg(2+)</name>
        <dbReference type="ChEBI" id="CHEBI:18420"/>
        <note>shared with alpha subunit</note>
    </ligand>
</feature>
<comment type="catalytic activity">
    <reaction evidence="1">
        <text>tRNA(Phe) + L-phenylalanine + ATP = L-phenylalanyl-tRNA(Phe) + AMP + diphosphate + H(+)</text>
        <dbReference type="Rhea" id="RHEA:19413"/>
        <dbReference type="Rhea" id="RHEA-COMP:9668"/>
        <dbReference type="Rhea" id="RHEA-COMP:9699"/>
        <dbReference type="ChEBI" id="CHEBI:15378"/>
        <dbReference type="ChEBI" id="CHEBI:30616"/>
        <dbReference type="ChEBI" id="CHEBI:33019"/>
        <dbReference type="ChEBI" id="CHEBI:58095"/>
        <dbReference type="ChEBI" id="CHEBI:78442"/>
        <dbReference type="ChEBI" id="CHEBI:78531"/>
        <dbReference type="ChEBI" id="CHEBI:456215"/>
        <dbReference type="EC" id="6.1.1.20"/>
    </reaction>
</comment>
<comment type="cofactor">
    <cofactor evidence="1">
        <name>Mg(2+)</name>
        <dbReference type="ChEBI" id="CHEBI:18420"/>
    </cofactor>
    <text evidence="1">Binds 2 magnesium ions per tetramer.</text>
</comment>
<comment type="subunit">
    <text evidence="1">Tetramer of two alpha and two beta subunits.</text>
</comment>
<comment type="subcellular location">
    <subcellularLocation>
        <location evidence="1">Cytoplasm</location>
    </subcellularLocation>
</comment>
<comment type="similarity">
    <text evidence="1">Belongs to the phenylalanyl-tRNA synthetase beta subunit family. Type 1 subfamily.</text>
</comment>
<proteinExistence type="inferred from homology"/>
<organism>
    <name type="scientific">Wolbachia sp. subsp. Brugia malayi (strain TRS)</name>
    <dbReference type="NCBI Taxonomy" id="292805"/>
    <lineage>
        <taxon>Bacteria</taxon>
        <taxon>Pseudomonadati</taxon>
        <taxon>Pseudomonadota</taxon>
        <taxon>Alphaproteobacteria</taxon>
        <taxon>Rickettsiales</taxon>
        <taxon>Anaplasmataceae</taxon>
        <taxon>Wolbachieae</taxon>
        <taxon>Wolbachia</taxon>
    </lineage>
</organism>
<accession>Q5GSH5</accession>